<name>CGLR_AETTU</name>
<accession>P0DXB8</accession>
<evidence type="ECO:0000250" key="1">
    <source>
        <dbReference type="UniProtKB" id="D6WI29"/>
    </source>
</evidence>
<evidence type="ECO:0000250" key="2">
    <source>
        <dbReference type="UniProtKB" id="Q8N884"/>
    </source>
</evidence>
<evidence type="ECO:0000256" key="3">
    <source>
        <dbReference type="SAM" id="MobiDB-lite"/>
    </source>
</evidence>
<evidence type="ECO:0000269" key="4">
    <source>
    </source>
</evidence>
<evidence type="ECO:0000303" key="5">
    <source>
    </source>
</evidence>
<evidence type="ECO:0000305" key="6"/>
<sequence length="396" mass="45880">MNKYNYMENVLQHINANVISLRDDEIKGNNIILKEILNIIIDKLKTKNIMFRKMYTCIFFGGSYYDGLRVGHPNEFDLDLLLTLHNLTKPIITKANEPGYVFLKLGNINNFLNIDDFKMYKQLSNLINKNGYLDVRKVLSWFEGIVTSSLNDIKEGSIYNFQIKGNTYKGTIHKGGPAFTLKIKGPNGSNMDIDLVPCFRFTEEHWPQGFKKSTSQQKSFFIVPKPLPDSTKSHYWRLSFQEQERELINNKGRLKPALRLLKQMRDTLNHHRIASYYLKTVFLWQVEEIGVDQSHWNSSLSYVFVCALKRYKEFLDSDNLPYFWEKKNNLLSGLHEDTLKNIRGSILKVLTDIESNNKDPNAIVKYLLTPEEQKRIMNGGNPQQSANAENGSCLSM</sequence>
<gene>
    <name evidence="5" type="primary">cGLR</name>
</gene>
<protein>
    <recommendedName>
        <fullName>Cyclic GMP-AMP synthase-like receptor</fullName>
        <shortName evidence="5">At-cGLR</shortName>
        <ecNumber evidence="4">2.7.7.86</ecNumber>
    </recommendedName>
</protein>
<keyword id="KW-0067">ATP-binding</keyword>
<keyword id="KW-0342">GTP-binding</keyword>
<keyword id="KW-0391">Immunity</keyword>
<keyword id="KW-0399">Innate immunity</keyword>
<keyword id="KW-0460">Magnesium</keyword>
<keyword id="KW-0464">Manganese</keyword>
<keyword id="KW-0479">Metal-binding</keyword>
<keyword id="KW-0547">Nucleotide-binding</keyword>
<keyword id="KW-0548">Nucleotidyltransferase</keyword>
<keyword id="KW-0694">RNA-binding</keyword>
<keyword id="KW-0808">Transferase</keyword>
<dbReference type="EC" id="2.7.7.86" evidence="4"/>
<dbReference type="EMBL" id="JALKMD010000002">
    <property type="status" value="NOT_ANNOTATED_CDS"/>
    <property type="molecule type" value="Genomic_DNA"/>
</dbReference>
<dbReference type="SMR" id="P0DXB8"/>
<dbReference type="KEGG" id="atd:109605901"/>
<dbReference type="GO" id="GO:0061501">
    <property type="term" value="F:2',3'-cyclic GMP-AMP synthase activity"/>
    <property type="evidence" value="ECO:0000314"/>
    <property type="project" value="UniProtKB"/>
</dbReference>
<dbReference type="GO" id="GO:0005524">
    <property type="term" value="F:ATP binding"/>
    <property type="evidence" value="ECO:0007669"/>
    <property type="project" value="UniProtKB-KW"/>
</dbReference>
<dbReference type="GO" id="GO:0003690">
    <property type="term" value="F:double-stranded DNA binding"/>
    <property type="evidence" value="ECO:0000314"/>
    <property type="project" value="UniProtKB"/>
</dbReference>
<dbReference type="GO" id="GO:0005525">
    <property type="term" value="F:GTP binding"/>
    <property type="evidence" value="ECO:0007669"/>
    <property type="project" value="UniProtKB-KW"/>
</dbReference>
<dbReference type="GO" id="GO:0046872">
    <property type="term" value="F:metal ion binding"/>
    <property type="evidence" value="ECO:0007669"/>
    <property type="project" value="UniProtKB-KW"/>
</dbReference>
<dbReference type="GO" id="GO:0003723">
    <property type="term" value="F:RNA binding"/>
    <property type="evidence" value="ECO:0007669"/>
    <property type="project" value="UniProtKB-KW"/>
</dbReference>
<dbReference type="GO" id="GO:0045087">
    <property type="term" value="P:innate immune response"/>
    <property type="evidence" value="ECO:0007669"/>
    <property type="project" value="UniProtKB-KW"/>
</dbReference>
<dbReference type="Gene3D" id="1.10.1410.40">
    <property type="match status" value="1"/>
</dbReference>
<dbReference type="Gene3D" id="3.30.460.90">
    <property type="match status" value="1"/>
</dbReference>
<dbReference type="InterPro" id="IPR046903">
    <property type="entry name" value="Mab-21-like_nuc_Trfase"/>
</dbReference>
<dbReference type="InterPro" id="IPR046906">
    <property type="entry name" value="Mab-21_HhH/H2TH-like"/>
</dbReference>
<dbReference type="InterPro" id="IPR024810">
    <property type="entry name" value="MAB21L/cGLR"/>
</dbReference>
<dbReference type="PANTHER" id="PTHR10656">
    <property type="entry name" value="CELL FATE DETERMINING PROTEIN MAB21-RELATED"/>
    <property type="match status" value="1"/>
</dbReference>
<dbReference type="PANTHER" id="PTHR10656:SF42">
    <property type="entry name" value="CYCLIC GMP-AMP SYNTHASE-LIKE PROTEIN-RELATED"/>
    <property type="match status" value="1"/>
</dbReference>
<dbReference type="Pfam" id="PF03281">
    <property type="entry name" value="Mab-21"/>
    <property type="match status" value="1"/>
</dbReference>
<dbReference type="Pfam" id="PF20266">
    <property type="entry name" value="Mab-21_C"/>
    <property type="match status" value="1"/>
</dbReference>
<dbReference type="SMART" id="SM01265">
    <property type="entry name" value="Mab-21"/>
    <property type="match status" value="1"/>
</dbReference>
<organism>
    <name type="scientific">Aethina tumida</name>
    <name type="common">Small hive beetle</name>
    <dbReference type="NCBI Taxonomy" id="116153"/>
    <lineage>
        <taxon>Eukaryota</taxon>
        <taxon>Metazoa</taxon>
        <taxon>Ecdysozoa</taxon>
        <taxon>Arthropoda</taxon>
        <taxon>Hexapoda</taxon>
        <taxon>Insecta</taxon>
        <taxon>Pterygota</taxon>
        <taxon>Neoptera</taxon>
        <taxon>Endopterygota</taxon>
        <taxon>Coleoptera</taxon>
        <taxon>Polyphaga</taxon>
        <taxon>Cucujiformia</taxon>
        <taxon>Nitidulidae</taxon>
        <taxon>Nitidulinae</taxon>
        <taxon>Aethina</taxon>
    </lineage>
</organism>
<comment type="function">
    <text evidence="4">Nucleotidyltransferase that catalyzes the formation of cyclic GMP-AMP (2',3'-cGAMP) from ATP and GTP and plays a key role in innate immunity (PubMed:37379839). Acts as a key sensor of double-stranded RNA (dsRNA), the presence of dsRNA in the cytoplasm being a danger signal that triggers the immune responses (PubMed:37379839). Directly binds dsRNA, activating the nucleotidyltransferase activity, leading to synthesis of 2',3'-cGAMP, a second messenger that binds to and activates Sting, thereby triggering the immune response via activation of the NF-kappa-B transcription factor (PubMed:37379839).</text>
</comment>
<comment type="catalytic activity">
    <reaction evidence="4">
        <text>GTP + ATP = 2',3'-cGAMP + 2 diphosphate</text>
        <dbReference type="Rhea" id="RHEA:42064"/>
        <dbReference type="ChEBI" id="CHEBI:30616"/>
        <dbReference type="ChEBI" id="CHEBI:33019"/>
        <dbReference type="ChEBI" id="CHEBI:37565"/>
        <dbReference type="ChEBI" id="CHEBI:143093"/>
        <dbReference type="EC" id="2.7.7.86"/>
    </reaction>
    <physiologicalReaction direction="left-to-right" evidence="4">
        <dbReference type="Rhea" id="RHEA:42065"/>
    </physiologicalReaction>
</comment>
<comment type="catalytic activity">
    <reaction evidence="4">
        <text>GTP + ATP = pppGp(2'-5')A + diphosphate</text>
        <dbReference type="Rhea" id="RHEA:23748"/>
        <dbReference type="ChEBI" id="CHEBI:30616"/>
        <dbReference type="ChEBI" id="CHEBI:33019"/>
        <dbReference type="ChEBI" id="CHEBI:37565"/>
        <dbReference type="ChEBI" id="CHEBI:78318"/>
    </reaction>
    <physiologicalReaction direction="left-to-right" evidence="4">
        <dbReference type="Rhea" id="RHEA:23749"/>
    </physiologicalReaction>
</comment>
<comment type="catalytic activity">
    <reaction evidence="4">
        <text>pppGp(2'-5')A = 2',3'-cGAMP + diphosphate</text>
        <dbReference type="Rhea" id="RHEA:23924"/>
        <dbReference type="ChEBI" id="CHEBI:33019"/>
        <dbReference type="ChEBI" id="CHEBI:78318"/>
        <dbReference type="ChEBI" id="CHEBI:143093"/>
    </reaction>
    <physiologicalReaction direction="left-to-right" evidence="4">
        <dbReference type="Rhea" id="RHEA:23925"/>
    </physiologicalReaction>
</comment>
<comment type="cofactor">
    <cofactor evidence="1">
        <name>Mg(2+)</name>
        <dbReference type="ChEBI" id="CHEBI:18420"/>
    </cofactor>
    <cofactor evidence="1">
        <name>Mn(2+)</name>
        <dbReference type="ChEBI" id="CHEBI:29035"/>
    </cofactor>
</comment>
<comment type="similarity">
    <text evidence="6">Belongs to the mab-21 family.</text>
</comment>
<feature type="chain" id="PRO_0000460012" description="Cyclic GMP-AMP synthase-like receptor">
    <location>
        <begin position="1"/>
        <end position="396"/>
    </location>
</feature>
<feature type="region of interest" description="Disordered" evidence="3">
    <location>
        <begin position="376"/>
        <end position="396"/>
    </location>
</feature>
<feature type="compositionally biased region" description="Polar residues" evidence="3">
    <location>
        <begin position="380"/>
        <end position="396"/>
    </location>
</feature>
<feature type="binding site" evidence="2">
    <location>
        <position position="63"/>
    </location>
    <ligand>
        <name>ATP</name>
        <dbReference type="ChEBI" id="CHEBI:30616"/>
    </ligand>
</feature>
<feature type="binding site" evidence="2">
    <location>
        <begin position="75"/>
        <end position="77"/>
    </location>
    <ligand>
        <name>ATP</name>
        <dbReference type="ChEBI" id="CHEBI:30616"/>
    </ligand>
</feature>
<feature type="binding site" evidence="2">
    <location>
        <position position="75"/>
    </location>
    <ligand>
        <name>Mg(2+)</name>
        <dbReference type="ChEBI" id="CHEBI:18420"/>
        <note>catalytic</note>
    </ligand>
</feature>
<feature type="binding site" evidence="2">
    <location>
        <position position="77"/>
    </location>
    <ligand>
        <name>Mg(2+)</name>
        <dbReference type="ChEBI" id="CHEBI:18420"/>
        <note>catalytic</note>
    </ligand>
</feature>
<feature type="binding site" evidence="2">
    <location>
        <position position="194"/>
    </location>
    <ligand>
        <name>GTP</name>
        <dbReference type="ChEBI" id="CHEBI:37565"/>
    </ligand>
</feature>
<feature type="binding site" evidence="2">
    <location>
        <position position="194"/>
    </location>
    <ligand>
        <name>Mg(2+)</name>
        <dbReference type="ChEBI" id="CHEBI:18420"/>
        <note>catalytic</note>
    </ligand>
</feature>
<feature type="binding site" evidence="2">
    <location>
        <begin position="241"/>
        <end position="244"/>
    </location>
    <ligand>
        <name>ATP</name>
        <dbReference type="ChEBI" id="CHEBI:30616"/>
    </ligand>
</feature>
<feature type="binding site" evidence="2">
    <location>
        <position position="262"/>
    </location>
    <ligand>
        <name>ATP</name>
        <dbReference type="ChEBI" id="CHEBI:30616"/>
    </ligand>
</feature>
<feature type="binding site" evidence="2">
    <location>
        <begin position="275"/>
        <end position="279"/>
    </location>
    <ligand>
        <name>ATP</name>
        <dbReference type="ChEBI" id="CHEBI:30616"/>
    </ligand>
</feature>
<feature type="binding site" evidence="1">
    <location>
        <position position="286"/>
    </location>
    <ligand>
        <name>Mn(2+)</name>
        <dbReference type="ChEBI" id="CHEBI:29035"/>
    </ligand>
</feature>
<feature type="binding site" evidence="1">
    <location>
        <position position="287"/>
    </location>
    <ligand>
        <name>Mn(2+)</name>
        <dbReference type="ChEBI" id="CHEBI:29035"/>
    </ligand>
</feature>
<feature type="binding site" evidence="1">
    <location>
        <position position="292"/>
    </location>
    <ligand>
        <name>Mn(2+)</name>
        <dbReference type="ChEBI" id="CHEBI:29035"/>
    </ligand>
</feature>
<reference key="1">
    <citation type="submission" date="2022-04" db="EMBL/GenBank/DDBJ databases">
        <title>Chromosome-scale assembly of Aethina tumida.</title>
        <authorList>
            <person name="Evans J."/>
            <person name="Huang Q."/>
            <person name="Sim S.B."/>
            <person name="Corpuz R.L."/>
            <person name="Simmonds T.J."/>
            <person name="Childers A."/>
            <person name="Kuhn K."/>
            <person name="Smith T."/>
            <person name="Geib S.M."/>
        </authorList>
    </citation>
    <scope>NUCLEOTIDE SEQUENCE [LARGE SCALE GENOMIC DNA]</scope>
</reference>
<reference key="2">
    <citation type="journal article" date="2023" name="Cell">
        <title>cGLRs are a diverse family of pattern recognition receptors in innate immunity.</title>
        <authorList>
            <person name="Li Y."/>
            <person name="Slavik K.M."/>
            <person name="Toyoda H.C."/>
            <person name="Morehouse B.R."/>
            <person name="de Oliveira Mann C.C."/>
            <person name="Elek A."/>
            <person name="Levy S."/>
            <person name="Wang Z."/>
            <person name="Mears K.S."/>
            <person name="Liu J."/>
            <person name="Kashin D."/>
            <person name="Guo X."/>
            <person name="Mass T."/>
            <person name="Sebe-Pedros A."/>
            <person name="Schwede F."/>
            <person name="Kranzusch P.J."/>
        </authorList>
    </citation>
    <scope>FUNCTION</scope>
    <scope>CATALYTIC ACTIVITY</scope>
</reference>
<proteinExistence type="evidence at protein level"/>